<comment type="function">
    <text evidence="1">Acts as a chaperone.</text>
</comment>
<comment type="induction">
    <text evidence="1">By stress conditions e.g. heat shock.</text>
</comment>
<comment type="similarity">
    <text evidence="1">Belongs to the heat shock protein 70 family.</text>
</comment>
<feature type="chain" id="PRO_1000059661" description="Chaperone protein DnaK">
    <location>
        <begin position="1"/>
        <end position="638"/>
    </location>
</feature>
<feature type="region of interest" description="Disordered" evidence="2">
    <location>
        <begin position="602"/>
        <end position="638"/>
    </location>
</feature>
<feature type="compositionally biased region" description="Acidic residues" evidence="2">
    <location>
        <begin position="624"/>
        <end position="638"/>
    </location>
</feature>
<feature type="modified residue" description="Phosphothreonine; by autocatalysis" evidence="1">
    <location>
        <position position="198"/>
    </location>
</feature>
<dbReference type="EMBL" id="CP000302">
    <property type="protein sequence ID" value="ABE54468.1"/>
    <property type="molecule type" value="Genomic_DNA"/>
</dbReference>
<dbReference type="RefSeq" id="WP_011495628.1">
    <property type="nucleotide sequence ID" value="NC_007954.1"/>
</dbReference>
<dbReference type="SMR" id="Q12Q08"/>
<dbReference type="STRING" id="318161.Sden_1182"/>
<dbReference type="KEGG" id="sdn:Sden_1182"/>
<dbReference type="eggNOG" id="COG0443">
    <property type="taxonomic scope" value="Bacteria"/>
</dbReference>
<dbReference type="HOGENOM" id="CLU_005965_2_1_6"/>
<dbReference type="OrthoDB" id="9766019at2"/>
<dbReference type="Proteomes" id="UP000001982">
    <property type="component" value="Chromosome"/>
</dbReference>
<dbReference type="GO" id="GO:0005524">
    <property type="term" value="F:ATP binding"/>
    <property type="evidence" value="ECO:0007669"/>
    <property type="project" value="UniProtKB-UniRule"/>
</dbReference>
<dbReference type="GO" id="GO:0140662">
    <property type="term" value="F:ATP-dependent protein folding chaperone"/>
    <property type="evidence" value="ECO:0007669"/>
    <property type="project" value="InterPro"/>
</dbReference>
<dbReference type="GO" id="GO:0051082">
    <property type="term" value="F:unfolded protein binding"/>
    <property type="evidence" value="ECO:0007669"/>
    <property type="project" value="InterPro"/>
</dbReference>
<dbReference type="CDD" id="cd10234">
    <property type="entry name" value="ASKHA_NBD_HSP70_DnaK-like"/>
    <property type="match status" value="1"/>
</dbReference>
<dbReference type="FunFam" id="2.60.34.10:FF:000014">
    <property type="entry name" value="Chaperone protein DnaK HSP70"/>
    <property type="match status" value="1"/>
</dbReference>
<dbReference type="FunFam" id="1.20.1270.10:FF:000001">
    <property type="entry name" value="Molecular chaperone DnaK"/>
    <property type="match status" value="1"/>
</dbReference>
<dbReference type="FunFam" id="3.30.420.40:FF:000004">
    <property type="entry name" value="Molecular chaperone DnaK"/>
    <property type="match status" value="1"/>
</dbReference>
<dbReference type="FunFam" id="3.90.640.10:FF:000003">
    <property type="entry name" value="Molecular chaperone DnaK"/>
    <property type="match status" value="1"/>
</dbReference>
<dbReference type="Gene3D" id="1.20.1270.10">
    <property type="match status" value="1"/>
</dbReference>
<dbReference type="Gene3D" id="3.30.420.40">
    <property type="match status" value="2"/>
</dbReference>
<dbReference type="Gene3D" id="3.90.640.10">
    <property type="entry name" value="Actin, Chain A, domain 4"/>
    <property type="match status" value="1"/>
</dbReference>
<dbReference type="Gene3D" id="2.60.34.10">
    <property type="entry name" value="Substrate Binding Domain Of DNAk, Chain A, domain 1"/>
    <property type="match status" value="1"/>
</dbReference>
<dbReference type="HAMAP" id="MF_00332">
    <property type="entry name" value="DnaK"/>
    <property type="match status" value="1"/>
</dbReference>
<dbReference type="InterPro" id="IPR043129">
    <property type="entry name" value="ATPase_NBD"/>
</dbReference>
<dbReference type="InterPro" id="IPR012725">
    <property type="entry name" value="Chaperone_DnaK"/>
</dbReference>
<dbReference type="InterPro" id="IPR018181">
    <property type="entry name" value="Heat_shock_70_CS"/>
</dbReference>
<dbReference type="InterPro" id="IPR029048">
    <property type="entry name" value="HSP70_C_sf"/>
</dbReference>
<dbReference type="InterPro" id="IPR029047">
    <property type="entry name" value="HSP70_peptide-bd_sf"/>
</dbReference>
<dbReference type="InterPro" id="IPR013126">
    <property type="entry name" value="Hsp_70_fam"/>
</dbReference>
<dbReference type="NCBIfam" id="NF001413">
    <property type="entry name" value="PRK00290.1"/>
    <property type="match status" value="1"/>
</dbReference>
<dbReference type="NCBIfam" id="NF003520">
    <property type="entry name" value="PRK05183.1"/>
    <property type="match status" value="1"/>
</dbReference>
<dbReference type="NCBIfam" id="TIGR02350">
    <property type="entry name" value="prok_dnaK"/>
    <property type="match status" value="1"/>
</dbReference>
<dbReference type="PANTHER" id="PTHR19375">
    <property type="entry name" value="HEAT SHOCK PROTEIN 70KDA"/>
    <property type="match status" value="1"/>
</dbReference>
<dbReference type="Pfam" id="PF00012">
    <property type="entry name" value="HSP70"/>
    <property type="match status" value="1"/>
</dbReference>
<dbReference type="PRINTS" id="PR00301">
    <property type="entry name" value="HEATSHOCK70"/>
</dbReference>
<dbReference type="SUPFAM" id="SSF53067">
    <property type="entry name" value="Actin-like ATPase domain"/>
    <property type="match status" value="2"/>
</dbReference>
<dbReference type="SUPFAM" id="SSF100920">
    <property type="entry name" value="Heat shock protein 70kD (HSP70), peptide-binding domain"/>
    <property type="match status" value="1"/>
</dbReference>
<dbReference type="PROSITE" id="PS00297">
    <property type="entry name" value="HSP70_1"/>
    <property type="match status" value="1"/>
</dbReference>
<dbReference type="PROSITE" id="PS00329">
    <property type="entry name" value="HSP70_2"/>
    <property type="match status" value="1"/>
</dbReference>
<dbReference type="PROSITE" id="PS01036">
    <property type="entry name" value="HSP70_3"/>
    <property type="match status" value="1"/>
</dbReference>
<organism>
    <name type="scientific">Shewanella denitrificans (strain OS217 / ATCC BAA-1090 / DSM 15013)</name>
    <dbReference type="NCBI Taxonomy" id="318161"/>
    <lineage>
        <taxon>Bacteria</taxon>
        <taxon>Pseudomonadati</taxon>
        <taxon>Pseudomonadota</taxon>
        <taxon>Gammaproteobacteria</taxon>
        <taxon>Alteromonadales</taxon>
        <taxon>Shewanellaceae</taxon>
        <taxon>Shewanella</taxon>
    </lineage>
</organism>
<protein>
    <recommendedName>
        <fullName evidence="1">Chaperone protein DnaK</fullName>
    </recommendedName>
    <alternativeName>
        <fullName evidence="1">HSP70</fullName>
    </alternativeName>
    <alternativeName>
        <fullName evidence="1">Heat shock 70 kDa protein</fullName>
    </alternativeName>
    <alternativeName>
        <fullName evidence="1">Heat shock protein 70</fullName>
    </alternativeName>
</protein>
<name>DNAK_SHEDO</name>
<evidence type="ECO:0000255" key="1">
    <source>
        <dbReference type="HAMAP-Rule" id="MF_00332"/>
    </source>
</evidence>
<evidence type="ECO:0000256" key="2">
    <source>
        <dbReference type="SAM" id="MobiDB-lite"/>
    </source>
</evidence>
<keyword id="KW-0067">ATP-binding</keyword>
<keyword id="KW-0143">Chaperone</keyword>
<keyword id="KW-0547">Nucleotide-binding</keyword>
<keyword id="KW-0597">Phosphoprotein</keyword>
<keyword id="KW-1185">Reference proteome</keyword>
<keyword id="KW-0346">Stress response</keyword>
<proteinExistence type="inferred from homology"/>
<gene>
    <name evidence="1" type="primary">dnaK</name>
    <name type="ordered locus">Sden_1182</name>
</gene>
<sequence length="638" mass="68790">MGKIIGIDLGTTNSCVAVLDGGKARVLENAEGDRTTPSIVAYTDEEIIVGQPAKRQAVTNPNNTFFAIKRLIGRRFKDDEVQRDVDIMPFKIIGADNGDAWVEQRGNKMAPPQVSAEILKKMKKTAEDFLGEEVTEAVITVPAYFNDSQRQATKDAGRIAGLEVKRIINEPTAAALAYGIDKKQGDNIVAVYDLGGGTFDISIIEIDSNDGDQTFEVLATNGDTHLGGEDFDNRLINYLADEFKKDQGLDLRRDPLAMQRLKEAAEKAKIELSSTNQTEVNLPYITADASGPKHLVVKVTRTKLESLVEDLIQRTLEPLKVALADADLSVSEINEVILVGGQTRMPKVQEAVTNFFGKEPRKDVNPDEAVAVGAAIQAGVLSGEVKDVLLLDVTPLSLGIETMGSVMTKLIDKNTTIPTKAQQVFSTADDNQSAVTIHVLQGERKQASANKSLGQFNLEGIEPAPRGQPQVEVMFDIDADGILHVSATDKKTGKKQNITIKASSGLSDEEVEQMVRDAEAHADEDAKFEALVQARNQADGLVHATKKQVTEAGDALASDEKEKIEAAMAAVDEATKGKDAEAIEKATQALIEASAKLMEIAQAKSQAQGGEEAQAKDAGQSNDDVVDAEFEEVKDDKK</sequence>
<accession>Q12Q08</accession>
<reference key="1">
    <citation type="submission" date="2006-03" db="EMBL/GenBank/DDBJ databases">
        <title>Complete sequence of Shewanella denitrificans OS217.</title>
        <authorList>
            <consortium name="US DOE Joint Genome Institute"/>
            <person name="Copeland A."/>
            <person name="Lucas S."/>
            <person name="Lapidus A."/>
            <person name="Barry K."/>
            <person name="Detter J.C."/>
            <person name="Glavina del Rio T."/>
            <person name="Hammon N."/>
            <person name="Israni S."/>
            <person name="Dalin E."/>
            <person name="Tice H."/>
            <person name="Pitluck S."/>
            <person name="Brettin T."/>
            <person name="Bruce D."/>
            <person name="Han C."/>
            <person name="Tapia R."/>
            <person name="Gilna P."/>
            <person name="Kiss H."/>
            <person name="Schmutz J."/>
            <person name="Larimer F."/>
            <person name="Land M."/>
            <person name="Hauser L."/>
            <person name="Kyrpides N."/>
            <person name="Lykidis A."/>
            <person name="Richardson P."/>
        </authorList>
    </citation>
    <scope>NUCLEOTIDE SEQUENCE [LARGE SCALE GENOMIC DNA]</scope>
    <source>
        <strain>OS217 / ATCC BAA-1090 / DSM 15013</strain>
    </source>
</reference>